<sequence length="280" mass="29847">MAVTAALVKELRERTGAGMMECKKALVETNGDIELAIENMRKSGAAKAAKKAGNIAAEGTIMIKEGEGIAALVEVNCQTDFVAKDSNFVAFANQVTDAALASKASVEELQAQFEEARVALVAKIGENINIRRVQYVEGEALATYRHGDRIGVVVAGSADVETLKHVAMHVAASRPEFLTPDDVPAEVVAKEREVQVGIAMNEGKSKEIAEKMVEGRMKKFTGEVSLTGQPFVMEPKKTVGEILAEKGATVSAFIRLEVGEGIEKQEGLSFAEEVALAQKG</sequence>
<gene>
    <name evidence="1" type="primary">tsf</name>
    <name type="ordered locus">VC0395_A1850</name>
    <name type="ordered locus">VC395_2375</name>
</gene>
<keyword id="KW-0963">Cytoplasm</keyword>
<keyword id="KW-0251">Elongation factor</keyword>
<keyword id="KW-0648">Protein biosynthesis</keyword>
<comment type="function">
    <text evidence="1">Associates with the EF-Tu.GDP complex and induces the exchange of GDP to GTP. It remains bound to the aminoacyl-tRNA.EF-Tu.GTP complex up to the GTP hydrolysis stage on the ribosome.</text>
</comment>
<comment type="subcellular location">
    <subcellularLocation>
        <location evidence="1">Cytoplasm</location>
    </subcellularLocation>
</comment>
<comment type="similarity">
    <text evidence="1">Belongs to the EF-Ts family.</text>
</comment>
<evidence type="ECO:0000255" key="1">
    <source>
        <dbReference type="HAMAP-Rule" id="MF_00050"/>
    </source>
</evidence>
<organism>
    <name type="scientific">Vibrio cholerae serotype O1 (strain ATCC 39541 / Classical Ogawa 395 / O395)</name>
    <dbReference type="NCBI Taxonomy" id="345073"/>
    <lineage>
        <taxon>Bacteria</taxon>
        <taxon>Pseudomonadati</taxon>
        <taxon>Pseudomonadota</taxon>
        <taxon>Gammaproteobacteria</taxon>
        <taxon>Vibrionales</taxon>
        <taxon>Vibrionaceae</taxon>
        <taxon>Vibrio</taxon>
    </lineage>
</organism>
<proteinExistence type="inferred from homology"/>
<protein>
    <recommendedName>
        <fullName evidence="1">Elongation factor Ts</fullName>
        <shortName evidence="1">EF-Ts</shortName>
    </recommendedName>
</protein>
<feature type="chain" id="PRO_1000071127" description="Elongation factor Ts">
    <location>
        <begin position="1"/>
        <end position="280"/>
    </location>
</feature>
<feature type="region of interest" description="Involved in Mg(2+) ion dislocation from EF-Tu" evidence="1">
    <location>
        <begin position="79"/>
        <end position="82"/>
    </location>
</feature>
<reference key="1">
    <citation type="submission" date="2007-03" db="EMBL/GenBank/DDBJ databases">
        <authorList>
            <person name="Heidelberg J."/>
        </authorList>
    </citation>
    <scope>NUCLEOTIDE SEQUENCE [LARGE SCALE GENOMIC DNA]</scope>
    <source>
        <strain>ATCC 39541 / Classical Ogawa 395 / O395</strain>
    </source>
</reference>
<reference key="2">
    <citation type="journal article" date="2008" name="PLoS ONE">
        <title>A recalibrated molecular clock and independent origins for the cholera pandemic clones.</title>
        <authorList>
            <person name="Feng L."/>
            <person name="Reeves P.R."/>
            <person name="Lan R."/>
            <person name="Ren Y."/>
            <person name="Gao C."/>
            <person name="Zhou Z."/>
            <person name="Ren Y."/>
            <person name="Cheng J."/>
            <person name="Wang W."/>
            <person name="Wang J."/>
            <person name="Qian W."/>
            <person name="Li D."/>
            <person name="Wang L."/>
        </authorList>
    </citation>
    <scope>NUCLEOTIDE SEQUENCE [LARGE SCALE GENOMIC DNA]</scope>
    <source>
        <strain>ATCC 39541 / Classical Ogawa 395 / O395</strain>
    </source>
</reference>
<accession>A5F606</accession>
<accession>C3M3L6</accession>
<name>EFTS_VIBC3</name>
<dbReference type="EMBL" id="CP000627">
    <property type="protein sequence ID" value="ABQ21941.1"/>
    <property type="molecule type" value="Genomic_DNA"/>
</dbReference>
<dbReference type="EMBL" id="CP001235">
    <property type="protein sequence ID" value="ACP10365.1"/>
    <property type="molecule type" value="Genomic_DNA"/>
</dbReference>
<dbReference type="RefSeq" id="WP_000301490.1">
    <property type="nucleotide sequence ID" value="NZ_JAACZH010000008.1"/>
</dbReference>
<dbReference type="SMR" id="A5F606"/>
<dbReference type="GeneID" id="69719116"/>
<dbReference type="KEGG" id="vco:VC0395_A1850"/>
<dbReference type="KEGG" id="vcr:VC395_2375"/>
<dbReference type="PATRIC" id="fig|345073.21.peg.2290"/>
<dbReference type="eggNOG" id="COG0264">
    <property type="taxonomic scope" value="Bacteria"/>
</dbReference>
<dbReference type="HOGENOM" id="CLU_047155_0_2_6"/>
<dbReference type="OrthoDB" id="9808348at2"/>
<dbReference type="Proteomes" id="UP000000249">
    <property type="component" value="Chromosome 2"/>
</dbReference>
<dbReference type="GO" id="GO:0005737">
    <property type="term" value="C:cytoplasm"/>
    <property type="evidence" value="ECO:0007669"/>
    <property type="project" value="UniProtKB-SubCell"/>
</dbReference>
<dbReference type="GO" id="GO:0003746">
    <property type="term" value="F:translation elongation factor activity"/>
    <property type="evidence" value="ECO:0007669"/>
    <property type="project" value="UniProtKB-UniRule"/>
</dbReference>
<dbReference type="CDD" id="cd14275">
    <property type="entry name" value="UBA_EF-Ts"/>
    <property type="match status" value="1"/>
</dbReference>
<dbReference type="FunFam" id="1.10.286.20:FF:000001">
    <property type="entry name" value="Elongation factor Ts"/>
    <property type="match status" value="1"/>
</dbReference>
<dbReference type="FunFam" id="1.10.8.10:FF:000001">
    <property type="entry name" value="Elongation factor Ts"/>
    <property type="match status" value="1"/>
</dbReference>
<dbReference type="FunFam" id="3.30.479.20:FF:000001">
    <property type="entry name" value="Elongation factor Ts"/>
    <property type="match status" value="1"/>
</dbReference>
<dbReference type="Gene3D" id="1.10.286.20">
    <property type="match status" value="1"/>
</dbReference>
<dbReference type="Gene3D" id="1.10.8.10">
    <property type="entry name" value="DNA helicase RuvA subunit, C-terminal domain"/>
    <property type="match status" value="1"/>
</dbReference>
<dbReference type="Gene3D" id="3.30.479.20">
    <property type="entry name" value="Elongation factor Ts, dimerisation domain"/>
    <property type="match status" value="2"/>
</dbReference>
<dbReference type="HAMAP" id="MF_00050">
    <property type="entry name" value="EF_Ts"/>
    <property type="match status" value="1"/>
</dbReference>
<dbReference type="InterPro" id="IPR036402">
    <property type="entry name" value="EF-Ts_dimer_sf"/>
</dbReference>
<dbReference type="InterPro" id="IPR001816">
    <property type="entry name" value="Transl_elong_EFTs/EF1B"/>
</dbReference>
<dbReference type="InterPro" id="IPR014039">
    <property type="entry name" value="Transl_elong_EFTs/EF1B_dimer"/>
</dbReference>
<dbReference type="InterPro" id="IPR018101">
    <property type="entry name" value="Transl_elong_Ts_CS"/>
</dbReference>
<dbReference type="InterPro" id="IPR009060">
    <property type="entry name" value="UBA-like_sf"/>
</dbReference>
<dbReference type="NCBIfam" id="TIGR00116">
    <property type="entry name" value="tsf"/>
    <property type="match status" value="1"/>
</dbReference>
<dbReference type="PANTHER" id="PTHR11741">
    <property type="entry name" value="ELONGATION FACTOR TS"/>
    <property type="match status" value="1"/>
</dbReference>
<dbReference type="PANTHER" id="PTHR11741:SF0">
    <property type="entry name" value="ELONGATION FACTOR TS, MITOCHONDRIAL"/>
    <property type="match status" value="1"/>
</dbReference>
<dbReference type="Pfam" id="PF00889">
    <property type="entry name" value="EF_TS"/>
    <property type="match status" value="1"/>
</dbReference>
<dbReference type="SUPFAM" id="SSF54713">
    <property type="entry name" value="Elongation factor Ts (EF-Ts), dimerisation domain"/>
    <property type="match status" value="2"/>
</dbReference>
<dbReference type="SUPFAM" id="SSF46934">
    <property type="entry name" value="UBA-like"/>
    <property type="match status" value="1"/>
</dbReference>
<dbReference type="PROSITE" id="PS01126">
    <property type="entry name" value="EF_TS_1"/>
    <property type="match status" value="1"/>
</dbReference>
<dbReference type="PROSITE" id="PS01127">
    <property type="entry name" value="EF_TS_2"/>
    <property type="match status" value="1"/>
</dbReference>